<feature type="chain" id="PRO_0000461027" description="C-glycoside deglycosidase alpha subunit">
    <location>
        <begin position="1"/>
        <end position="368"/>
    </location>
</feature>
<feature type="active site" description="Proton acceptor" evidence="1">
    <location>
        <position position="147"/>
    </location>
</feature>
<feature type="binding site" evidence="1">
    <location>
        <position position="145"/>
    </location>
    <ligand>
        <name>a divalent metal cation</name>
        <dbReference type="ChEBI" id="CHEBI:60240"/>
    </ligand>
</feature>
<feature type="binding site" evidence="1">
    <location>
        <position position="177"/>
    </location>
    <ligand>
        <name>a divalent metal cation</name>
        <dbReference type="ChEBI" id="CHEBI:60240"/>
    </ligand>
</feature>
<feature type="binding site" evidence="1">
    <location>
        <position position="275"/>
    </location>
    <ligand>
        <name>a divalent metal cation</name>
        <dbReference type="ChEBI" id="CHEBI:60240"/>
    </ligand>
</feature>
<feature type="binding site" evidence="1">
    <location>
        <position position="311"/>
    </location>
    <ligand>
        <name>a divalent metal cation</name>
        <dbReference type="ChEBI" id="CHEBI:60240"/>
    </ligand>
</feature>
<sequence length="368" mass="40432">MTALGTPIQGVTLYSFTRAFHGREYDLEGLIRKTAADGFGPGLEIIGFSSFRGFPAIDDAYAGWFRDLIDEVGLVTTSLAVNADIGIHRDRLLNQDELIEYMTLQIKAAAKLGFPIARVQISIEPDSMEALAPIAEAHGVTLALEVHADQYASHPRILALRDRYEKVGSPFLGFTMDWGATVSGFAPSLIEAYRRRGASEELLGQVVDLWNTYYEQGPPADQADHGQRFGSFIGLAARHGRPDLGIDFGINGTGLFGPARVDDWRTIAPWIKHVHGKFFGIDENGEEPSVPVRDLVKLLVENGYNGAISSEYEGWHWNYWQSPFDIISDEQAVQRSAAEAAGSRMITDLAEARTQLGAWLPNTEGAHA</sequence>
<evidence type="ECO:0000250" key="1">
    <source>
        <dbReference type="UniProtKB" id="H0QPL9"/>
    </source>
</evidence>
<evidence type="ECO:0000269" key="2">
    <source>
    </source>
</evidence>
<evidence type="ECO:0000303" key="3">
    <source>
    </source>
</evidence>
<evidence type="ECO:0000305" key="4"/>
<evidence type="ECO:0000312" key="5">
    <source>
        <dbReference type="EMBL" id="KJL42925.1"/>
    </source>
</evidence>
<protein>
    <recommendedName>
        <fullName evidence="3">C-glycoside deglycosidase alpha subunit</fullName>
        <shortName evidence="3">CGD alpha subunit</shortName>
        <ecNumber evidence="2">4.1.99.-</ecNumber>
    </recommendedName>
    <alternativeName>
        <fullName evidence="3">C-deglycosylation enzyme alpha subunit</fullName>
    </alternativeName>
    <alternativeName>
        <fullName evidence="3">MtCGD alpha</fullName>
    </alternativeName>
</protein>
<proteinExistence type="evidence at protein level"/>
<dbReference type="EC" id="4.1.99.-" evidence="2"/>
<dbReference type="EMBL" id="JYJA01000033">
    <property type="protein sequence ID" value="KJL42925.1"/>
    <property type="molecule type" value="Genomic_DNA"/>
</dbReference>
<dbReference type="RefSeq" id="WP_045298606.1">
    <property type="nucleotide sequence ID" value="NZ_JYJA01000033.1"/>
</dbReference>
<dbReference type="SMR" id="A0A0M2H8P8"/>
<dbReference type="PATRIC" id="fig|69370.6.peg.1922"/>
<dbReference type="OrthoDB" id="3520171at2"/>
<dbReference type="Proteomes" id="UP000034098">
    <property type="component" value="Unassembled WGS sequence"/>
</dbReference>
<dbReference type="GO" id="GO:0016829">
    <property type="term" value="F:lyase activity"/>
    <property type="evidence" value="ECO:0007669"/>
    <property type="project" value="UniProtKB-KW"/>
</dbReference>
<dbReference type="GO" id="GO:0046872">
    <property type="term" value="F:metal ion binding"/>
    <property type="evidence" value="ECO:0007669"/>
    <property type="project" value="UniProtKB-KW"/>
</dbReference>
<dbReference type="Gene3D" id="3.20.20.150">
    <property type="entry name" value="Divalent-metal-dependent TIM barrel enzymes"/>
    <property type="match status" value="1"/>
</dbReference>
<dbReference type="InterPro" id="IPR050312">
    <property type="entry name" value="IolE/XylAMocC-like"/>
</dbReference>
<dbReference type="InterPro" id="IPR036237">
    <property type="entry name" value="Xyl_isomerase-like_sf"/>
</dbReference>
<dbReference type="InterPro" id="IPR013022">
    <property type="entry name" value="Xyl_isomerase-like_TIM-brl"/>
</dbReference>
<dbReference type="PANTHER" id="PTHR12110:SF53">
    <property type="entry name" value="BLR5974 PROTEIN"/>
    <property type="match status" value="1"/>
</dbReference>
<dbReference type="PANTHER" id="PTHR12110">
    <property type="entry name" value="HYDROXYPYRUVATE ISOMERASE"/>
    <property type="match status" value="1"/>
</dbReference>
<dbReference type="Pfam" id="PF01261">
    <property type="entry name" value="AP_endonuc_2"/>
    <property type="match status" value="1"/>
</dbReference>
<dbReference type="SUPFAM" id="SSF51658">
    <property type="entry name" value="Xylose isomerase-like"/>
    <property type="match status" value="1"/>
</dbReference>
<organism>
    <name type="scientific">Microbacterium trichothecenolyticum</name>
    <name type="common">Aureobacterium trichothecenolyticum</name>
    <dbReference type="NCBI Taxonomy" id="69370"/>
    <lineage>
        <taxon>Bacteria</taxon>
        <taxon>Bacillati</taxon>
        <taxon>Actinomycetota</taxon>
        <taxon>Actinomycetes</taxon>
        <taxon>Micrococcales</taxon>
        <taxon>Microbacteriaceae</taxon>
        <taxon>Microbacterium</taxon>
    </lineage>
</organism>
<gene>
    <name evidence="3" type="primary">carB</name>
    <name evidence="5" type="ORF">RS82_01890</name>
</gene>
<keyword id="KW-0119">Carbohydrate metabolism</keyword>
<keyword id="KW-0456">Lyase</keyword>
<keyword id="KW-0479">Metal-binding</keyword>
<keyword id="KW-1185">Reference proteome</keyword>
<accession>A0A0M2H8P8</accession>
<reference key="1">
    <citation type="submission" date="2015-02" db="EMBL/GenBank/DDBJ databases">
        <title>Draft genome sequences of ten Microbacterium spp. with emphasis on heavy metal contaminated environments.</title>
        <authorList>
            <person name="Corretto E."/>
        </authorList>
    </citation>
    <scope>NUCLEOTIDE SEQUENCE [LARGE SCALE GENOMIC DNA]</scope>
    <source>
        <strain>ATCC 51475 / DSM 8608 / JCM 1358 / LMG 16696 / NBRC 15077 / NRRL B-24212 / 114-2</strain>
    </source>
</reference>
<reference key="2">
    <citation type="journal article" date="2021" name="Nat. Commun.">
        <title>C-Glycoside metabolism in the gut and in nature: Identification, characterization, structural analyses and distribution of C-C bond-cleaving enzymes.</title>
        <authorList>
            <person name="Mori T."/>
            <person name="Kumano T."/>
            <person name="He H."/>
            <person name="Watanabe S."/>
            <person name="Senda M."/>
            <person name="Moriya T."/>
            <person name="Adachi N."/>
            <person name="Hori S."/>
            <person name="Terashita Y."/>
            <person name="Kawasaki M."/>
            <person name="Hashimoto Y."/>
            <person name="Awakawa T."/>
            <person name="Senda T."/>
            <person name="Abe I."/>
            <person name="Kobayashi M."/>
        </authorList>
    </citation>
    <scope>FUNCTION</scope>
    <scope>CATALYTIC ACTIVITY</scope>
    <scope>BIOPHYSICOCHEMICAL PROPERTIES</scope>
    <scope>SUBUNIT</scope>
    <source>
        <strain>ATCC 51475 / DSM 8608 / JCM 1358 / LMG 16696 / NBRC 15077 / NRRL B-24212 / 114-2</strain>
    </source>
</reference>
<comment type="function">
    <text evidence="2">Carbon-carbon bond-cleaving enzyme which participates in the metabolism of C-glycosides (PubMed:34728636). Acts on the C6-glycosylated compounds 3''-dehydroisovitexin (3''-oxo-isovitexin) and 3''-dehydroisoorientin (3''-oxo-homoorientin) (PubMed:34728636). Shows weak activity with 3'-dehydromangiferin (3'-oxo-mangiferin) (PubMed:34728636).</text>
</comment>
<comment type="catalytic activity">
    <reaction evidence="2">
        <text>3''-dehydroisovitexin = 1,5-anhydro-D-erythro-hex-1-en-3-ulose + apigenin</text>
        <dbReference type="Rhea" id="RHEA:78775"/>
        <dbReference type="ChEBI" id="CHEBI:58470"/>
        <dbReference type="ChEBI" id="CHEBI:194219"/>
        <dbReference type="ChEBI" id="CHEBI:195275"/>
    </reaction>
</comment>
<comment type="catalytic activity">
    <reaction evidence="2">
        <text>3''-dehydroisoorientin = 1,5-anhydro-D-erythro-hex-1-en-3-ulose + luteolin</text>
        <dbReference type="Rhea" id="RHEA:78771"/>
        <dbReference type="ChEBI" id="CHEBI:57545"/>
        <dbReference type="ChEBI" id="CHEBI:194218"/>
        <dbReference type="ChEBI" id="CHEBI:195275"/>
    </reaction>
</comment>
<comment type="cofactor">
    <cofactor evidence="1">
        <name>a divalent metal cation</name>
        <dbReference type="ChEBI" id="CHEBI:60240"/>
    </cofactor>
</comment>
<comment type="biophysicochemical properties">
    <kinetics>
        <KM evidence="2">8.2 mM for 3''-dehydroisovitexin</KM>
        <KM evidence="2">6.1 mM for 3'-dehydromangiferin</KM>
        <text evidence="2">kcat is 32 min(-1) with 3''-dehydroisovitexin as substrate. kcat is 21 min(-1) with 3''-dehydroisoorientin as substrate. kcat is 0.60 min(-1) with 3'-dehydromangiferin as substrate.</text>
    </kinetics>
    <phDependence>
        <text evidence="2">Optimum pH is 6.0.</text>
    </phDependence>
    <temperatureDependence>
        <text evidence="2">Optimum temperature is around 40 degrees Celsius.</text>
    </temperatureDependence>
</comment>
<comment type="subunit">
    <text evidence="2">Heterodimer composed of an alpha subunit (CarB) and a beta subunit (CarC).</text>
</comment>
<comment type="similarity">
    <text evidence="4">Belongs to the C-glycoside deglycosidase alpha subunit family.</text>
</comment>
<name>CGDA_MICTR</name>